<feature type="chain" id="PRO_0000382926" description="ADP,ATP carrier protein 3">
    <location>
        <begin position="1"/>
        <end position="543"/>
    </location>
</feature>
<feature type="transmembrane region" description="Helical" evidence="1">
    <location>
        <begin position="46"/>
        <end position="66"/>
    </location>
</feature>
<feature type="transmembrane region" description="Helical" evidence="1">
    <location>
        <begin position="86"/>
        <end position="106"/>
    </location>
</feature>
<feature type="transmembrane region" description="Helical" evidence="1">
    <location>
        <begin position="111"/>
        <end position="131"/>
    </location>
</feature>
<feature type="transmembrane region" description="Helical" evidence="1">
    <location>
        <begin position="175"/>
        <end position="195"/>
    </location>
</feature>
<feature type="transmembrane region" description="Helical" evidence="1">
    <location>
        <begin position="209"/>
        <end position="229"/>
    </location>
</feature>
<feature type="transmembrane region" description="Helical" evidence="1">
    <location>
        <begin position="243"/>
        <end position="263"/>
    </location>
</feature>
<feature type="transmembrane region" description="Helical" evidence="1">
    <location>
        <begin position="306"/>
        <end position="326"/>
    </location>
</feature>
<feature type="transmembrane region" description="Helical" evidence="1">
    <location>
        <begin position="346"/>
        <end position="366"/>
    </location>
</feature>
<feature type="transmembrane region" description="Helical" evidence="1">
    <location>
        <begin position="382"/>
        <end position="402"/>
    </location>
</feature>
<feature type="transmembrane region" description="Helical" evidence="1">
    <location>
        <begin position="504"/>
        <end position="524"/>
    </location>
</feature>
<evidence type="ECO:0000255" key="1"/>
<evidence type="ECO:0000269" key="2">
    <source>
    </source>
</evidence>
<evidence type="ECO:0000305" key="3"/>
<accession>Q8SUG0</accession>
<protein>
    <recommendedName>
        <fullName>ADP,ATP carrier protein 3</fullName>
    </recommendedName>
    <alternativeName>
        <fullName>ADP/ATP translocase 3</fullName>
    </alternativeName>
    <alternativeName>
        <fullName>Nucleotide transporter 3</fullName>
    </alternativeName>
</protein>
<keyword id="KW-0067">ATP-binding</keyword>
<keyword id="KW-0472">Membrane</keyword>
<keyword id="KW-1025">Mitosome</keyword>
<keyword id="KW-0547">Nucleotide-binding</keyword>
<keyword id="KW-1185">Reference proteome</keyword>
<keyword id="KW-0812">Transmembrane</keyword>
<keyword id="KW-1133">Transmembrane helix</keyword>
<keyword id="KW-0813">Transport</keyword>
<reference key="1">
    <citation type="journal article" date="2008" name="Nature">
        <title>A novel route for ATP acquisition by the remnant mitochondria of Encephalitozoon cuniculi.</title>
        <authorList>
            <person name="Tsaousis A.D."/>
            <person name="Kunji E.R.S."/>
            <person name="Goldberg A.V."/>
            <person name="Lucocq J.M."/>
            <person name="Hirt R.P."/>
            <person name="Embley T.M."/>
        </authorList>
    </citation>
    <scope>NUCLEOTIDE SEQUENCE [GENOMIC DNA]</scope>
    <scope>SUBCELLULAR LOCATION</scope>
    <scope>FUNCTION</scope>
    <scope>BIOPHYSICOCHEMICAL PROPERTIES</scope>
</reference>
<reference key="2">
    <citation type="journal article" date="2001" name="Nature">
        <title>Genome sequence and gene compaction of the eukaryote parasite Encephalitozoon cuniculi.</title>
        <authorList>
            <person name="Katinka M.D."/>
            <person name="Duprat S."/>
            <person name="Cornillot E."/>
            <person name="Metenier G."/>
            <person name="Thomarat F."/>
            <person name="Prensier G."/>
            <person name="Barbe V."/>
            <person name="Peyretaillade E."/>
            <person name="Brottier P."/>
            <person name="Wincker P."/>
            <person name="Delbac F."/>
            <person name="El Alaoui H."/>
            <person name="Peyret P."/>
            <person name="Saurin W."/>
            <person name="Gouy M."/>
            <person name="Weissenbach J."/>
            <person name="Vivares C.P."/>
        </authorList>
    </citation>
    <scope>NUCLEOTIDE SEQUENCE [LARGE SCALE GENOMIC DNA]</scope>
    <source>
        <strain>GB-M1</strain>
    </source>
</reference>
<comment type="function">
    <text evidence="2">ATP transporter involved in the uptake of ATP from the parasite cell cytoplasm into the mitosome matrix. Equilibrates nucleotide pools across a concentration gradient between both sides of the mitosome membrane.</text>
</comment>
<comment type="biophysicochemical properties">
    <kinetics>
        <KM evidence="2">24.2 uM for ATP uptake</KM>
    </kinetics>
</comment>
<comment type="subcellular location">
    <subcellularLocation>
        <location evidence="2">Mitosome membrane</location>
        <topology evidence="2">Multi-pass membrane protein</topology>
    </subcellularLocation>
</comment>
<comment type="similarity">
    <text evidence="3">Belongs to the ADP/ATP translocase tlc family.</text>
</comment>
<name>NTT3_ENCCU</name>
<proteinExistence type="evidence at protein level"/>
<organism>
    <name type="scientific">Encephalitozoon cuniculi (strain GB-M1)</name>
    <name type="common">Microsporidian parasite</name>
    <dbReference type="NCBI Taxonomy" id="284813"/>
    <lineage>
        <taxon>Eukaryota</taxon>
        <taxon>Fungi</taxon>
        <taxon>Fungi incertae sedis</taxon>
        <taxon>Microsporidia</taxon>
        <taxon>Unikaryonidae</taxon>
        <taxon>Encephalitozoon</taxon>
    </lineage>
</organism>
<sequence length="543" mass="61648">MSTFQLSASSKDSYLFRTEEELEEEVYGKTGFFKHIRVARNEWPRVLYLSLLFGVITMVHTIMGNLREMVLMGRQDPMSMFFIKSIFLPPCSLLFIWAIQLGLSLFTPSKMFDITLILFSGCYILFGLVVWPLKGYIQKDFYWSRDIFGDGKMESLRIHFLYPVFLVFNEWTSSFLFLCSEMWGALVVSYFFNIFANEVSTRRQSQRYISVYNISNAISIFLSAVLTLVFNKWRDGVAFETKELGFRILILVLGSTVIGILALKKYMEREILPAPVFLIREVEKTSTERRKLKLDEARQTLSRSKLLIAISLNVLLYGVTSTLVEATFKSGIAAGARYTNNSKETFANFYNGLEQIIIAISLLVVINTPYSALVKKGGWKYLASLPIVIAMFSLFSVFLIAFYNVGADSGGNVLFGSLFKNRMPTFILENTLGLVTNASMKIGKYLGADVSKEAISMQIDPLYRAKYKAVYDGLCGKLGKSLGSIICTVMTGLWDITDIRRVSSVSGILIVIIIAMWYFILKYLSRQFQAAVEANTYIELDEF</sequence>
<dbReference type="EMBL" id="EU040268">
    <property type="protein sequence ID" value="ABW20409.1"/>
    <property type="molecule type" value="Genomic_DNA"/>
</dbReference>
<dbReference type="EMBL" id="AL590449">
    <property type="protein sequence ID" value="CAD25771.1"/>
    <property type="molecule type" value="Genomic_DNA"/>
</dbReference>
<dbReference type="RefSeq" id="NP_586167.1">
    <property type="nucleotide sequence ID" value="NM_001042000.1"/>
</dbReference>
<dbReference type="TCDB" id="2.A.12.1.12">
    <property type="family name" value="the atp:adp antiporter (aaa) family"/>
</dbReference>
<dbReference type="GeneID" id="859816"/>
<dbReference type="KEGG" id="ecu:ECU10_0520"/>
<dbReference type="VEuPathDB" id="MicrosporidiaDB:ECU10_0520"/>
<dbReference type="HOGENOM" id="CLU_023964_1_0_1"/>
<dbReference type="InParanoid" id="Q8SUG0"/>
<dbReference type="OMA" id="IYWWVNN"/>
<dbReference type="OrthoDB" id="2190844at2759"/>
<dbReference type="Proteomes" id="UP000000819">
    <property type="component" value="Chromosome X"/>
</dbReference>
<dbReference type="GO" id="GO:0016020">
    <property type="term" value="C:membrane"/>
    <property type="evidence" value="ECO:0007669"/>
    <property type="project" value="UniProtKB-KW"/>
</dbReference>
<dbReference type="GO" id="GO:0032047">
    <property type="term" value="C:mitosome"/>
    <property type="evidence" value="ECO:0007669"/>
    <property type="project" value="UniProtKB-KW"/>
</dbReference>
<dbReference type="GO" id="GO:0005524">
    <property type="term" value="F:ATP binding"/>
    <property type="evidence" value="ECO:0007669"/>
    <property type="project" value="UniProtKB-KW"/>
</dbReference>
<dbReference type="GO" id="GO:0005471">
    <property type="term" value="F:ATP:ADP antiporter activity"/>
    <property type="evidence" value="ECO:0007669"/>
    <property type="project" value="InterPro"/>
</dbReference>
<dbReference type="InterPro" id="IPR004667">
    <property type="entry name" value="ADP_ATP_car_bac_type"/>
</dbReference>
<dbReference type="PANTHER" id="PTHR31187">
    <property type="match status" value="1"/>
</dbReference>
<dbReference type="PANTHER" id="PTHR31187:SF1">
    <property type="entry name" value="ADP,ATP CARRIER PROTEIN 1"/>
    <property type="match status" value="1"/>
</dbReference>
<dbReference type="Pfam" id="PF03219">
    <property type="entry name" value="TLC"/>
    <property type="match status" value="1"/>
</dbReference>
<gene>
    <name type="primary">NTT3</name>
    <name type="ordered locus">ECU10_0520</name>
</gene>